<protein>
    <recommendedName>
        <fullName evidence="1">Fatty acid oxidation complex subunit alpha</fullName>
    </recommendedName>
    <domain>
        <recommendedName>
            <fullName evidence="1">Enoyl-CoA hydratase/Delta(3)-cis-Delta(2)-trans-enoyl-CoA isomerase/3-hydroxybutyryl-CoA epimerase</fullName>
            <ecNumber evidence="1">4.2.1.17</ecNumber>
            <ecNumber evidence="1">5.1.2.3</ecNumber>
            <ecNumber evidence="1">5.3.3.8</ecNumber>
        </recommendedName>
    </domain>
    <domain>
        <recommendedName>
            <fullName evidence="1">3-hydroxyacyl-CoA dehydrogenase</fullName>
            <ecNumber evidence="1">1.1.1.35</ecNumber>
        </recommendedName>
    </domain>
</protein>
<feature type="chain" id="PRO_1000069581" description="Fatty acid oxidation complex subunit alpha">
    <location>
        <begin position="1"/>
        <end position="716"/>
    </location>
</feature>
<feature type="region of interest" description="Enoyl-CoA hydratase/isomerase" evidence="1">
    <location>
        <begin position="1"/>
        <end position="189"/>
    </location>
</feature>
<feature type="region of interest" description="3-hydroxyacyl-CoA dehydrogenase" evidence="1">
    <location>
        <begin position="311"/>
        <end position="716"/>
    </location>
</feature>
<feature type="active site" description="For 3-hydroxyacyl-CoA dehydrogenase activity" evidence="1">
    <location>
        <position position="450"/>
    </location>
</feature>
<feature type="binding site" evidence="1">
    <location>
        <position position="296"/>
    </location>
    <ligand>
        <name>substrate</name>
    </ligand>
</feature>
<feature type="binding site" evidence="1">
    <location>
        <position position="324"/>
    </location>
    <ligand>
        <name>NAD(+)</name>
        <dbReference type="ChEBI" id="CHEBI:57540"/>
    </ligand>
</feature>
<feature type="binding site" evidence="1">
    <location>
        <position position="343"/>
    </location>
    <ligand>
        <name>NAD(+)</name>
        <dbReference type="ChEBI" id="CHEBI:57540"/>
    </ligand>
</feature>
<feature type="binding site" evidence="1">
    <location>
        <begin position="400"/>
        <end position="402"/>
    </location>
    <ligand>
        <name>NAD(+)</name>
        <dbReference type="ChEBI" id="CHEBI:57540"/>
    </ligand>
</feature>
<feature type="binding site" evidence="1">
    <location>
        <position position="407"/>
    </location>
    <ligand>
        <name>NAD(+)</name>
        <dbReference type="ChEBI" id="CHEBI:57540"/>
    </ligand>
</feature>
<feature type="binding site" evidence="1">
    <location>
        <position position="429"/>
    </location>
    <ligand>
        <name>NAD(+)</name>
        <dbReference type="ChEBI" id="CHEBI:57540"/>
    </ligand>
</feature>
<feature type="binding site" evidence="1">
    <location>
        <position position="453"/>
    </location>
    <ligand>
        <name>NAD(+)</name>
        <dbReference type="ChEBI" id="CHEBI:57540"/>
    </ligand>
</feature>
<feature type="binding site" evidence="1">
    <location>
        <position position="500"/>
    </location>
    <ligand>
        <name>substrate</name>
    </ligand>
</feature>
<feature type="binding site" evidence="1">
    <location>
        <position position="660"/>
    </location>
    <ligand>
        <name>substrate</name>
    </ligand>
</feature>
<feature type="site" description="Important for catalytic activity" evidence="1">
    <location>
        <position position="119"/>
    </location>
</feature>
<feature type="site" description="Important for catalytic activity" evidence="1">
    <location>
        <position position="139"/>
    </location>
</feature>
<evidence type="ECO:0000255" key="1">
    <source>
        <dbReference type="HAMAP-Rule" id="MF_01621"/>
    </source>
</evidence>
<name>FADB_SHESW</name>
<proteinExistence type="inferred from homology"/>
<keyword id="KW-0276">Fatty acid metabolism</keyword>
<keyword id="KW-0413">Isomerase</keyword>
<keyword id="KW-0442">Lipid degradation</keyword>
<keyword id="KW-0443">Lipid metabolism</keyword>
<keyword id="KW-0456">Lyase</keyword>
<keyword id="KW-0511">Multifunctional enzyme</keyword>
<keyword id="KW-0520">NAD</keyword>
<keyword id="KW-0560">Oxidoreductase</keyword>
<sequence length="716" mass="76716">MIYQSPTIQVELLEDNIAKLCFNAPGSVNKFDRETLASLDAALDSIKQNSNIKALVLTSSKDTFIVGADITEFLGLFAQDDAVLLSWVEQANAVFNKLEDLPFPTASAIKGFALGGGCETILATDFRIADTTAKIGLPETKLGIIPGFGGTVRLPRVIGADNALEWISTGNDQRAEDALKVGAVDAVVAPEALEAAAIQMLKDAVAEKLDWQARRNRKLSALTLPKLEAMMSFTTAKGMVFAVAGKHYPAPMAAVSVIEQASTKGRAEALQIEHQAFIKLAKTDVAKALIGIFLNDQLVKGKAKKAGKLAKEVKNAAVLGAGIMGGGIAYQSASKGTPIVMKDIAQPALDLGLNEAAKLLSAQVARGRSTPEKMAKVLNNITPSLDYAALKHSDVVVEAVVEHPKIKAQVLAEVEGYVSEDAIIASNTSTISINLLAKSMKKPERFCGMHFFNPVHKMPLVEVIRGEHSSEETIASVVAYASKMGKTPIVVNDCPGFFVNRVLFPYFAGFNGLLAEGGDFAAIDKVMEKQFGWPMGPAYLLDVVGLDTGHHAQAVMAEGFPDRMGKSGTDAIDVMFENKRLGQKNGKGFYVYSVDSRGKPKKDVDPTSYGLLKDAFGELKTFEADDIIARTMIPMIIETVRCLEEGIVASPAEADMGLVYGLGFPPFRGGVFRYLDTMGVANFVALADKYAHLGGLYQVTDAMRTKATNNGSYYQA</sequence>
<reference key="1">
    <citation type="submission" date="2006-12" db="EMBL/GenBank/DDBJ databases">
        <title>Complete sequence of Shewanella sp. W3-18-1.</title>
        <authorList>
            <consortium name="US DOE Joint Genome Institute"/>
            <person name="Copeland A."/>
            <person name="Lucas S."/>
            <person name="Lapidus A."/>
            <person name="Barry K."/>
            <person name="Detter J.C."/>
            <person name="Glavina del Rio T."/>
            <person name="Hammon N."/>
            <person name="Israni S."/>
            <person name="Dalin E."/>
            <person name="Tice H."/>
            <person name="Pitluck S."/>
            <person name="Chain P."/>
            <person name="Malfatti S."/>
            <person name="Shin M."/>
            <person name="Vergez L."/>
            <person name="Schmutz J."/>
            <person name="Larimer F."/>
            <person name="Land M."/>
            <person name="Hauser L."/>
            <person name="Kyrpides N."/>
            <person name="Lykidis A."/>
            <person name="Tiedje J."/>
            <person name="Richardson P."/>
        </authorList>
    </citation>
    <scope>NUCLEOTIDE SEQUENCE [LARGE SCALE GENOMIC DNA]</scope>
    <source>
        <strain>W3-18-1</strain>
    </source>
</reference>
<gene>
    <name evidence="1" type="primary">fadB</name>
    <name type="ordered locus">Sputw3181_0013</name>
</gene>
<organism>
    <name type="scientific">Shewanella sp. (strain W3-18-1)</name>
    <dbReference type="NCBI Taxonomy" id="351745"/>
    <lineage>
        <taxon>Bacteria</taxon>
        <taxon>Pseudomonadati</taxon>
        <taxon>Pseudomonadota</taxon>
        <taxon>Gammaproteobacteria</taxon>
        <taxon>Alteromonadales</taxon>
        <taxon>Shewanellaceae</taxon>
        <taxon>Shewanella</taxon>
    </lineage>
</organism>
<dbReference type="EC" id="4.2.1.17" evidence="1"/>
<dbReference type="EC" id="5.1.2.3" evidence="1"/>
<dbReference type="EC" id="5.3.3.8" evidence="1"/>
<dbReference type="EC" id="1.1.1.35" evidence="1"/>
<dbReference type="EMBL" id="CP000503">
    <property type="protein sequence ID" value="ABM22866.1"/>
    <property type="molecule type" value="Genomic_DNA"/>
</dbReference>
<dbReference type="RefSeq" id="WP_011787435.1">
    <property type="nucleotide sequence ID" value="NC_008750.1"/>
</dbReference>
<dbReference type="SMR" id="A1RDW6"/>
<dbReference type="KEGG" id="shw:Sputw3181_0013"/>
<dbReference type="HOGENOM" id="CLU_009834_16_3_6"/>
<dbReference type="UniPathway" id="UPA00659"/>
<dbReference type="Proteomes" id="UP000002597">
    <property type="component" value="Chromosome"/>
</dbReference>
<dbReference type="GO" id="GO:0036125">
    <property type="term" value="C:fatty acid beta-oxidation multienzyme complex"/>
    <property type="evidence" value="ECO:0007669"/>
    <property type="project" value="InterPro"/>
</dbReference>
<dbReference type="GO" id="GO:0008692">
    <property type="term" value="F:3-hydroxybutyryl-CoA epimerase activity"/>
    <property type="evidence" value="ECO:0007669"/>
    <property type="project" value="UniProtKB-UniRule"/>
</dbReference>
<dbReference type="GO" id="GO:0004165">
    <property type="term" value="F:delta(3)-delta(2)-enoyl-CoA isomerase activity"/>
    <property type="evidence" value="ECO:0007669"/>
    <property type="project" value="UniProtKB-UniRule"/>
</dbReference>
<dbReference type="GO" id="GO:0004300">
    <property type="term" value="F:enoyl-CoA hydratase activity"/>
    <property type="evidence" value="ECO:0007669"/>
    <property type="project" value="UniProtKB-UniRule"/>
</dbReference>
<dbReference type="GO" id="GO:0016509">
    <property type="term" value="F:long-chain-3-hydroxyacyl-CoA dehydrogenase activity"/>
    <property type="evidence" value="ECO:0007669"/>
    <property type="project" value="TreeGrafter"/>
</dbReference>
<dbReference type="GO" id="GO:0070403">
    <property type="term" value="F:NAD+ binding"/>
    <property type="evidence" value="ECO:0007669"/>
    <property type="project" value="InterPro"/>
</dbReference>
<dbReference type="GO" id="GO:0006635">
    <property type="term" value="P:fatty acid beta-oxidation"/>
    <property type="evidence" value="ECO:0007669"/>
    <property type="project" value="UniProtKB-UniRule"/>
</dbReference>
<dbReference type="CDD" id="cd06558">
    <property type="entry name" value="crotonase-like"/>
    <property type="match status" value="1"/>
</dbReference>
<dbReference type="FunFam" id="1.10.1040.50:FF:000001">
    <property type="entry name" value="Fatty acid oxidation complex subunit alpha"/>
    <property type="match status" value="1"/>
</dbReference>
<dbReference type="FunFam" id="3.40.50.720:FF:000009">
    <property type="entry name" value="Fatty oxidation complex, alpha subunit"/>
    <property type="match status" value="1"/>
</dbReference>
<dbReference type="Gene3D" id="1.10.1040.50">
    <property type="match status" value="1"/>
</dbReference>
<dbReference type="Gene3D" id="3.90.226.10">
    <property type="entry name" value="2-enoyl-CoA Hydratase, Chain A, domain 1"/>
    <property type="match status" value="1"/>
</dbReference>
<dbReference type="Gene3D" id="3.40.50.720">
    <property type="entry name" value="NAD(P)-binding Rossmann-like Domain"/>
    <property type="match status" value="1"/>
</dbReference>
<dbReference type="HAMAP" id="MF_01621">
    <property type="entry name" value="FadB"/>
    <property type="match status" value="1"/>
</dbReference>
<dbReference type="InterPro" id="IPR006180">
    <property type="entry name" value="3-OHacyl-CoA_DH_CS"/>
</dbReference>
<dbReference type="InterPro" id="IPR006176">
    <property type="entry name" value="3-OHacyl-CoA_DH_NAD-bd"/>
</dbReference>
<dbReference type="InterPro" id="IPR006108">
    <property type="entry name" value="3HC_DH_C"/>
</dbReference>
<dbReference type="InterPro" id="IPR008927">
    <property type="entry name" value="6-PGluconate_DH-like_C_sf"/>
</dbReference>
<dbReference type="InterPro" id="IPR029045">
    <property type="entry name" value="ClpP/crotonase-like_dom_sf"/>
</dbReference>
<dbReference type="InterPro" id="IPR001753">
    <property type="entry name" value="Enoyl-CoA_hydra/iso"/>
</dbReference>
<dbReference type="InterPro" id="IPR050136">
    <property type="entry name" value="FA_oxidation_alpha_subunit"/>
</dbReference>
<dbReference type="InterPro" id="IPR012799">
    <property type="entry name" value="FadB"/>
</dbReference>
<dbReference type="InterPro" id="IPR036291">
    <property type="entry name" value="NAD(P)-bd_dom_sf"/>
</dbReference>
<dbReference type="NCBIfam" id="TIGR02437">
    <property type="entry name" value="FadB"/>
    <property type="match status" value="1"/>
</dbReference>
<dbReference type="NCBIfam" id="NF008727">
    <property type="entry name" value="PRK11730.1"/>
    <property type="match status" value="1"/>
</dbReference>
<dbReference type="PANTHER" id="PTHR43612">
    <property type="entry name" value="TRIFUNCTIONAL ENZYME SUBUNIT ALPHA"/>
    <property type="match status" value="1"/>
</dbReference>
<dbReference type="PANTHER" id="PTHR43612:SF3">
    <property type="entry name" value="TRIFUNCTIONAL ENZYME SUBUNIT ALPHA, MITOCHONDRIAL"/>
    <property type="match status" value="1"/>
</dbReference>
<dbReference type="Pfam" id="PF00725">
    <property type="entry name" value="3HCDH"/>
    <property type="match status" value="1"/>
</dbReference>
<dbReference type="Pfam" id="PF02737">
    <property type="entry name" value="3HCDH_N"/>
    <property type="match status" value="1"/>
</dbReference>
<dbReference type="Pfam" id="PF00378">
    <property type="entry name" value="ECH_1"/>
    <property type="match status" value="1"/>
</dbReference>
<dbReference type="SUPFAM" id="SSF48179">
    <property type="entry name" value="6-phosphogluconate dehydrogenase C-terminal domain-like"/>
    <property type="match status" value="2"/>
</dbReference>
<dbReference type="SUPFAM" id="SSF52096">
    <property type="entry name" value="ClpP/crotonase"/>
    <property type="match status" value="1"/>
</dbReference>
<dbReference type="SUPFAM" id="SSF51735">
    <property type="entry name" value="NAD(P)-binding Rossmann-fold domains"/>
    <property type="match status" value="1"/>
</dbReference>
<dbReference type="PROSITE" id="PS00067">
    <property type="entry name" value="3HCDH"/>
    <property type="match status" value="1"/>
</dbReference>
<comment type="function">
    <text evidence="1">Involved in the aerobic and anaerobic degradation of long-chain fatty acids via beta-oxidation cycle. Catalyzes the formation of 3-oxoacyl-CoA from enoyl-CoA via L-3-hydroxyacyl-CoA. It can also use D-3-hydroxyacyl-CoA and cis-3-enoyl-CoA as substrate.</text>
</comment>
<comment type="catalytic activity">
    <reaction evidence="1">
        <text>a (3S)-3-hydroxyacyl-CoA + NAD(+) = a 3-oxoacyl-CoA + NADH + H(+)</text>
        <dbReference type="Rhea" id="RHEA:22432"/>
        <dbReference type="ChEBI" id="CHEBI:15378"/>
        <dbReference type="ChEBI" id="CHEBI:57318"/>
        <dbReference type="ChEBI" id="CHEBI:57540"/>
        <dbReference type="ChEBI" id="CHEBI:57945"/>
        <dbReference type="ChEBI" id="CHEBI:90726"/>
        <dbReference type="EC" id="1.1.1.35"/>
    </reaction>
</comment>
<comment type="catalytic activity">
    <reaction evidence="1">
        <text>a (3S)-3-hydroxyacyl-CoA = a (2E)-enoyl-CoA + H2O</text>
        <dbReference type="Rhea" id="RHEA:16105"/>
        <dbReference type="ChEBI" id="CHEBI:15377"/>
        <dbReference type="ChEBI" id="CHEBI:57318"/>
        <dbReference type="ChEBI" id="CHEBI:58856"/>
        <dbReference type="EC" id="4.2.1.17"/>
    </reaction>
</comment>
<comment type="catalytic activity">
    <reaction evidence="1">
        <text>a 4-saturated-(3S)-3-hydroxyacyl-CoA = a (3E)-enoyl-CoA + H2O</text>
        <dbReference type="Rhea" id="RHEA:20724"/>
        <dbReference type="ChEBI" id="CHEBI:15377"/>
        <dbReference type="ChEBI" id="CHEBI:58521"/>
        <dbReference type="ChEBI" id="CHEBI:137480"/>
        <dbReference type="EC" id="4.2.1.17"/>
    </reaction>
</comment>
<comment type="catalytic activity">
    <reaction evidence="1">
        <text>(3S)-3-hydroxybutanoyl-CoA = (3R)-3-hydroxybutanoyl-CoA</text>
        <dbReference type="Rhea" id="RHEA:21760"/>
        <dbReference type="ChEBI" id="CHEBI:57315"/>
        <dbReference type="ChEBI" id="CHEBI:57316"/>
        <dbReference type="EC" id="5.1.2.3"/>
    </reaction>
</comment>
<comment type="catalytic activity">
    <reaction evidence="1">
        <text>a (3Z)-enoyl-CoA = a 4-saturated (2E)-enoyl-CoA</text>
        <dbReference type="Rhea" id="RHEA:45900"/>
        <dbReference type="ChEBI" id="CHEBI:85097"/>
        <dbReference type="ChEBI" id="CHEBI:85489"/>
        <dbReference type="EC" id="5.3.3.8"/>
    </reaction>
</comment>
<comment type="catalytic activity">
    <reaction evidence="1">
        <text>a (3E)-enoyl-CoA = a 4-saturated (2E)-enoyl-CoA</text>
        <dbReference type="Rhea" id="RHEA:45228"/>
        <dbReference type="ChEBI" id="CHEBI:58521"/>
        <dbReference type="ChEBI" id="CHEBI:85097"/>
        <dbReference type="EC" id="5.3.3.8"/>
    </reaction>
</comment>
<comment type="pathway">
    <text evidence="1">Lipid metabolism; fatty acid beta-oxidation.</text>
</comment>
<comment type="subunit">
    <text evidence="1">Heterotetramer of two alpha chains (FadB) and two beta chains (FadA).</text>
</comment>
<comment type="similarity">
    <text evidence="1">In the N-terminal section; belongs to the enoyl-CoA hydratase/isomerase family.</text>
</comment>
<comment type="similarity">
    <text evidence="1">In the C-terminal section; belongs to the 3-hydroxyacyl-CoA dehydrogenase family.</text>
</comment>
<accession>A1RDW6</accession>